<protein>
    <recommendedName>
        <fullName evidence="1">6,7-dimethyl-8-ribityllumazine synthase</fullName>
        <shortName evidence="1">DMRL synthase</shortName>
        <shortName evidence="1">LS</shortName>
        <shortName evidence="1">Lumazine synthase</shortName>
        <ecNumber evidence="1">2.5.1.78</ecNumber>
    </recommendedName>
</protein>
<gene>
    <name evidence="1" type="primary">ribH</name>
    <name type="ordered locus">PTH_1758</name>
</gene>
<accession>A5D1C7</accession>
<dbReference type="EC" id="2.5.1.78" evidence="1"/>
<dbReference type="EMBL" id="AP009389">
    <property type="protein sequence ID" value="BAF59939.1"/>
    <property type="molecule type" value="Genomic_DNA"/>
</dbReference>
<dbReference type="SMR" id="A5D1C7"/>
<dbReference type="STRING" id="370438.PTH_1758"/>
<dbReference type="KEGG" id="pth:PTH_1758"/>
<dbReference type="eggNOG" id="COG0054">
    <property type="taxonomic scope" value="Bacteria"/>
</dbReference>
<dbReference type="HOGENOM" id="CLU_089358_1_1_9"/>
<dbReference type="UniPathway" id="UPA00275">
    <property type="reaction ID" value="UER00404"/>
</dbReference>
<dbReference type="Proteomes" id="UP000006556">
    <property type="component" value="Chromosome"/>
</dbReference>
<dbReference type="GO" id="GO:0005829">
    <property type="term" value="C:cytosol"/>
    <property type="evidence" value="ECO:0007669"/>
    <property type="project" value="TreeGrafter"/>
</dbReference>
<dbReference type="GO" id="GO:0009349">
    <property type="term" value="C:riboflavin synthase complex"/>
    <property type="evidence" value="ECO:0007669"/>
    <property type="project" value="InterPro"/>
</dbReference>
<dbReference type="GO" id="GO:0000906">
    <property type="term" value="F:6,7-dimethyl-8-ribityllumazine synthase activity"/>
    <property type="evidence" value="ECO:0007669"/>
    <property type="project" value="UniProtKB-UniRule"/>
</dbReference>
<dbReference type="GO" id="GO:0009231">
    <property type="term" value="P:riboflavin biosynthetic process"/>
    <property type="evidence" value="ECO:0007669"/>
    <property type="project" value="UniProtKB-UniRule"/>
</dbReference>
<dbReference type="CDD" id="cd09209">
    <property type="entry name" value="Lumazine_synthase-I"/>
    <property type="match status" value="1"/>
</dbReference>
<dbReference type="FunFam" id="3.40.50.960:FF:000001">
    <property type="entry name" value="6,7-dimethyl-8-ribityllumazine synthase"/>
    <property type="match status" value="1"/>
</dbReference>
<dbReference type="Gene3D" id="3.40.50.960">
    <property type="entry name" value="Lumazine/riboflavin synthase"/>
    <property type="match status" value="1"/>
</dbReference>
<dbReference type="HAMAP" id="MF_00178">
    <property type="entry name" value="Lumazine_synth"/>
    <property type="match status" value="1"/>
</dbReference>
<dbReference type="InterPro" id="IPR034964">
    <property type="entry name" value="LS"/>
</dbReference>
<dbReference type="InterPro" id="IPR002180">
    <property type="entry name" value="LS/RS"/>
</dbReference>
<dbReference type="InterPro" id="IPR036467">
    <property type="entry name" value="LS/RS_sf"/>
</dbReference>
<dbReference type="NCBIfam" id="TIGR00114">
    <property type="entry name" value="lumazine-synth"/>
    <property type="match status" value="1"/>
</dbReference>
<dbReference type="NCBIfam" id="NF000812">
    <property type="entry name" value="PRK00061.1-4"/>
    <property type="match status" value="1"/>
</dbReference>
<dbReference type="PANTHER" id="PTHR21058:SF0">
    <property type="entry name" value="6,7-DIMETHYL-8-RIBITYLLUMAZINE SYNTHASE"/>
    <property type="match status" value="1"/>
</dbReference>
<dbReference type="PANTHER" id="PTHR21058">
    <property type="entry name" value="6,7-DIMETHYL-8-RIBITYLLUMAZINE SYNTHASE DMRL SYNTHASE LUMAZINE SYNTHASE"/>
    <property type="match status" value="1"/>
</dbReference>
<dbReference type="Pfam" id="PF00885">
    <property type="entry name" value="DMRL_synthase"/>
    <property type="match status" value="1"/>
</dbReference>
<dbReference type="SUPFAM" id="SSF52121">
    <property type="entry name" value="Lumazine synthase"/>
    <property type="match status" value="1"/>
</dbReference>
<keyword id="KW-1185">Reference proteome</keyword>
<keyword id="KW-0686">Riboflavin biosynthesis</keyword>
<keyword id="KW-0808">Transferase</keyword>
<organism>
    <name type="scientific">Pelotomaculum thermopropionicum (strain DSM 13744 / JCM 10971 / SI)</name>
    <dbReference type="NCBI Taxonomy" id="370438"/>
    <lineage>
        <taxon>Bacteria</taxon>
        <taxon>Bacillati</taxon>
        <taxon>Bacillota</taxon>
        <taxon>Clostridia</taxon>
        <taxon>Eubacteriales</taxon>
        <taxon>Desulfotomaculaceae</taxon>
        <taxon>Pelotomaculum</taxon>
    </lineage>
</organism>
<comment type="function">
    <text evidence="1">Catalyzes the formation of 6,7-dimethyl-8-ribityllumazine by condensation of 5-amino-6-(D-ribitylamino)uracil with 3,4-dihydroxy-2-butanone 4-phosphate. This is the penultimate step in the biosynthesis of riboflavin.</text>
</comment>
<comment type="catalytic activity">
    <reaction evidence="1">
        <text>(2S)-2-hydroxy-3-oxobutyl phosphate + 5-amino-6-(D-ribitylamino)uracil = 6,7-dimethyl-8-(1-D-ribityl)lumazine + phosphate + 2 H2O + H(+)</text>
        <dbReference type="Rhea" id="RHEA:26152"/>
        <dbReference type="ChEBI" id="CHEBI:15377"/>
        <dbReference type="ChEBI" id="CHEBI:15378"/>
        <dbReference type="ChEBI" id="CHEBI:15934"/>
        <dbReference type="ChEBI" id="CHEBI:43474"/>
        <dbReference type="ChEBI" id="CHEBI:58201"/>
        <dbReference type="ChEBI" id="CHEBI:58830"/>
        <dbReference type="EC" id="2.5.1.78"/>
    </reaction>
</comment>
<comment type="pathway">
    <text evidence="1">Cofactor biosynthesis; riboflavin biosynthesis; riboflavin from 2-hydroxy-3-oxobutyl phosphate and 5-amino-6-(D-ribitylamino)uracil: step 1/2.</text>
</comment>
<comment type="similarity">
    <text evidence="1">Belongs to the DMRL synthase family.</text>
</comment>
<reference key="1">
    <citation type="journal article" date="2008" name="Genome Res.">
        <title>The genome of Pelotomaculum thermopropionicum reveals niche-associated evolution in anaerobic microbiota.</title>
        <authorList>
            <person name="Kosaka T."/>
            <person name="Kato S."/>
            <person name="Shimoyama T."/>
            <person name="Ishii S."/>
            <person name="Abe T."/>
            <person name="Watanabe K."/>
        </authorList>
    </citation>
    <scope>NUCLEOTIDE SEQUENCE [LARGE SCALE GENOMIC DNA]</scope>
    <source>
        <strain>DSM 13744 / JCM 10971 / SI</strain>
    </source>
</reference>
<feature type="chain" id="PRO_1000098214" description="6,7-dimethyl-8-ribityllumazine synthase">
    <location>
        <begin position="1"/>
        <end position="155"/>
    </location>
</feature>
<feature type="active site" description="Proton donor" evidence="1">
    <location>
        <position position="89"/>
    </location>
</feature>
<feature type="binding site" evidence="1">
    <location>
        <position position="23"/>
    </location>
    <ligand>
        <name>5-amino-6-(D-ribitylamino)uracil</name>
        <dbReference type="ChEBI" id="CHEBI:15934"/>
    </ligand>
</feature>
<feature type="binding site" evidence="1">
    <location>
        <begin position="57"/>
        <end position="59"/>
    </location>
    <ligand>
        <name>5-amino-6-(D-ribitylamino)uracil</name>
        <dbReference type="ChEBI" id="CHEBI:15934"/>
    </ligand>
</feature>
<feature type="binding site" evidence="1">
    <location>
        <begin position="81"/>
        <end position="83"/>
    </location>
    <ligand>
        <name>5-amino-6-(D-ribitylamino)uracil</name>
        <dbReference type="ChEBI" id="CHEBI:15934"/>
    </ligand>
</feature>
<feature type="binding site" evidence="1">
    <location>
        <begin position="86"/>
        <end position="87"/>
    </location>
    <ligand>
        <name>(2S)-2-hydroxy-3-oxobutyl phosphate</name>
        <dbReference type="ChEBI" id="CHEBI:58830"/>
    </ligand>
</feature>
<feature type="binding site" evidence="1">
    <location>
        <position position="114"/>
    </location>
    <ligand>
        <name>5-amino-6-(D-ribitylamino)uracil</name>
        <dbReference type="ChEBI" id="CHEBI:15934"/>
    </ligand>
</feature>
<feature type="binding site" evidence="1">
    <location>
        <position position="128"/>
    </location>
    <ligand>
        <name>(2S)-2-hydroxy-3-oxobutyl phosphate</name>
        <dbReference type="ChEBI" id="CHEBI:58830"/>
    </ligand>
</feature>
<evidence type="ECO:0000255" key="1">
    <source>
        <dbReference type="HAMAP-Rule" id="MF_00178"/>
    </source>
</evidence>
<proteinExistence type="inferred from homology"/>
<sequence length="155" mass="16466">MPKLYEGHLIGQGLRFGIVIGRFNEFITNKLLSGALDALNRHGVADQDIEVAWVPGAFEIPMVARKMASAMKYDAVICLGAVIRGATPHFDYVAGEVAKGVARIGLESGVPTIFGVITADSIEQAIERAGAKAGNKGWDAAVTAIEMANLMKILK</sequence>
<name>RISB_PELTS</name>